<sequence>MRHQLRIPLLSKPADQRKALLRGLTTQLIREGRVTTTKARAKALRNEAERMISLAKEGSLASRRRAIGYIYDKKLVHSLFEKAKERYGDRNGGYTRIVRTVSRKGDNAQMAIIELV</sequence>
<feature type="chain" id="PRO_1000055907" description="Large ribosomal subunit protein bL17">
    <location>
        <begin position="1"/>
        <end position="116"/>
    </location>
</feature>
<accession>A3PF24</accession>
<protein>
    <recommendedName>
        <fullName evidence="1">Large ribosomal subunit protein bL17</fullName>
    </recommendedName>
    <alternativeName>
        <fullName evidence="2">50S ribosomal protein L17</fullName>
    </alternativeName>
</protein>
<evidence type="ECO:0000255" key="1">
    <source>
        <dbReference type="HAMAP-Rule" id="MF_01368"/>
    </source>
</evidence>
<evidence type="ECO:0000305" key="2"/>
<gene>
    <name evidence="1" type="primary">rplQ</name>
    <name evidence="1" type="synonym">rpl17</name>
    <name type="ordered locus">P9301_17261</name>
</gene>
<keyword id="KW-1185">Reference proteome</keyword>
<keyword id="KW-0687">Ribonucleoprotein</keyword>
<keyword id="KW-0689">Ribosomal protein</keyword>
<organism>
    <name type="scientific">Prochlorococcus marinus (strain MIT 9301)</name>
    <dbReference type="NCBI Taxonomy" id="167546"/>
    <lineage>
        <taxon>Bacteria</taxon>
        <taxon>Bacillati</taxon>
        <taxon>Cyanobacteriota</taxon>
        <taxon>Cyanophyceae</taxon>
        <taxon>Synechococcales</taxon>
        <taxon>Prochlorococcaceae</taxon>
        <taxon>Prochlorococcus</taxon>
    </lineage>
</organism>
<name>RL17_PROM0</name>
<dbReference type="EMBL" id="CP000576">
    <property type="protein sequence ID" value="ABO18349.1"/>
    <property type="molecule type" value="Genomic_DNA"/>
</dbReference>
<dbReference type="RefSeq" id="WP_011863642.1">
    <property type="nucleotide sequence ID" value="NC_009091.1"/>
</dbReference>
<dbReference type="SMR" id="A3PF24"/>
<dbReference type="STRING" id="167546.P9301_17261"/>
<dbReference type="KEGG" id="pmg:P9301_17261"/>
<dbReference type="eggNOG" id="COG0203">
    <property type="taxonomic scope" value="Bacteria"/>
</dbReference>
<dbReference type="HOGENOM" id="CLU_074407_2_2_3"/>
<dbReference type="OrthoDB" id="9809073at2"/>
<dbReference type="Proteomes" id="UP000001430">
    <property type="component" value="Chromosome"/>
</dbReference>
<dbReference type="GO" id="GO:0022625">
    <property type="term" value="C:cytosolic large ribosomal subunit"/>
    <property type="evidence" value="ECO:0007669"/>
    <property type="project" value="TreeGrafter"/>
</dbReference>
<dbReference type="GO" id="GO:0003735">
    <property type="term" value="F:structural constituent of ribosome"/>
    <property type="evidence" value="ECO:0007669"/>
    <property type="project" value="InterPro"/>
</dbReference>
<dbReference type="GO" id="GO:0006412">
    <property type="term" value="P:translation"/>
    <property type="evidence" value="ECO:0007669"/>
    <property type="project" value="UniProtKB-UniRule"/>
</dbReference>
<dbReference type="FunFam" id="3.90.1030.10:FF:000001">
    <property type="entry name" value="50S ribosomal protein L17"/>
    <property type="match status" value="1"/>
</dbReference>
<dbReference type="Gene3D" id="3.90.1030.10">
    <property type="entry name" value="Ribosomal protein L17"/>
    <property type="match status" value="1"/>
</dbReference>
<dbReference type="HAMAP" id="MF_01368">
    <property type="entry name" value="Ribosomal_bL17"/>
    <property type="match status" value="1"/>
</dbReference>
<dbReference type="InterPro" id="IPR000456">
    <property type="entry name" value="Ribosomal_bL17"/>
</dbReference>
<dbReference type="InterPro" id="IPR036373">
    <property type="entry name" value="Ribosomal_bL17_sf"/>
</dbReference>
<dbReference type="NCBIfam" id="TIGR00059">
    <property type="entry name" value="L17"/>
    <property type="match status" value="1"/>
</dbReference>
<dbReference type="PANTHER" id="PTHR14413:SF16">
    <property type="entry name" value="LARGE RIBOSOMAL SUBUNIT PROTEIN BL17M"/>
    <property type="match status" value="1"/>
</dbReference>
<dbReference type="PANTHER" id="PTHR14413">
    <property type="entry name" value="RIBOSOMAL PROTEIN L17"/>
    <property type="match status" value="1"/>
</dbReference>
<dbReference type="Pfam" id="PF01196">
    <property type="entry name" value="Ribosomal_L17"/>
    <property type="match status" value="1"/>
</dbReference>
<dbReference type="SUPFAM" id="SSF64263">
    <property type="entry name" value="Prokaryotic ribosomal protein L17"/>
    <property type="match status" value="1"/>
</dbReference>
<proteinExistence type="inferred from homology"/>
<comment type="subunit">
    <text evidence="1">Part of the 50S ribosomal subunit. Contacts protein L32.</text>
</comment>
<comment type="similarity">
    <text evidence="1">Belongs to the bacterial ribosomal protein bL17 family.</text>
</comment>
<reference key="1">
    <citation type="journal article" date="2007" name="PLoS Genet.">
        <title>Patterns and implications of gene gain and loss in the evolution of Prochlorococcus.</title>
        <authorList>
            <person name="Kettler G.C."/>
            <person name="Martiny A.C."/>
            <person name="Huang K."/>
            <person name="Zucker J."/>
            <person name="Coleman M.L."/>
            <person name="Rodrigue S."/>
            <person name="Chen F."/>
            <person name="Lapidus A."/>
            <person name="Ferriera S."/>
            <person name="Johnson J."/>
            <person name="Steglich C."/>
            <person name="Church G.M."/>
            <person name="Richardson P."/>
            <person name="Chisholm S.W."/>
        </authorList>
    </citation>
    <scope>NUCLEOTIDE SEQUENCE [LARGE SCALE GENOMIC DNA]</scope>
    <source>
        <strain>MIT 9301</strain>
    </source>
</reference>